<evidence type="ECO:0000255" key="1">
    <source>
        <dbReference type="HAMAP-Rule" id="MF_01120"/>
    </source>
</evidence>
<protein>
    <recommendedName>
        <fullName evidence="1">[LysW]-lysine/[LysW]-ornithine hydrolase</fullName>
        <ecNumber evidence="1">3.5.1.130</ecNumber>
        <ecNumber evidence="1">3.5.1.132</ecNumber>
    </recommendedName>
</protein>
<reference key="1">
    <citation type="journal article" date="2009" name="Proc. Natl. Acad. Sci. U.S.A.">
        <title>Biogeography of the Sulfolobus islandicus pan-genome.</title>
        <authorList>
            <person name="Reno M.L."/>
            <person name="Held N.L."/>
            <person name="Fields C.J."/>
            <person name="Burke P.V."/>
            <person name="Whitaker R.J."/>
        </authorList>
    </citation>
    <scope>NUCLEOTIDE SEQUENCE [LARGE SCALE GENOMIC DNA]</scope>
    <source>
        <strain>M.16.27</strain>
    </source>
</reference>
<name>LYSK_SACI3</name>
<gene>
    <name evidence="1" type="primary">lysK</name>
    <name type="ordered locus">M1627_2056</name>
</gene>
<accession>C3MZU1</accession>
<comment type="function">
    <text evidence="1">Catalyzes the release of L-lysine from [LysW]-gamma-L-lysine and the release of L-ornithine from [LysW]-L-ornithine.</text>
</comment>
<comment type="catalytic activity">
    <reaction evidence="1">
        <text>[amino-group carrier protein]-C-terminal-gamma-(L-lysyl)-L-glutamate + H2O = [amino-group carrier protein]-C-terminal-L-glutamate + L-lysine</text>
        <dbReference type="Rhea" id="RHEA:48684"/>
        <dbReference type="Rhea" id="RHEA-COMP:9693"/>
        <dbReference type="Rhea" id="RHEA-COMP:9715"/>
        <dbReference type="ChEBI" id="CHEBI:15377"/>
        <dbReference type="ChEBI" id="CHEBI:32551"/>
        <dbReference type="ChEBI" id="CHEBI:78525"/>
        <dbReference type="ChEBI" id="CHEBI:78526"/>
        <dbReference type="EC" id="3.5.1.130"/>
    </reaction>
</comment>
<comment type="catalytic activity">
    <reaction evidence="1">
        <text>[amino-group carrier protein]-C-terminal-gamma-(L-ornithyl)-L-glutamate + H2O = [amino-group carrier protein]-C-terminal-L-glutamate + L-ornithine</text>
        <dbReference type="Rhea" id="RHEA:52676"/>
        <dbReference type="Rhea" id="RHEA-COMP:9693"/>
        <dbReference type="Rhea" id="RHEA-COMP:13328"/>
        <dbReference type="ChEBI" id="CHEBI:15377"/>
        <dbReference type="ChEBI" id="CHEBI:46911"/>
        <dbReference type="ChEBI" id="CHEBI:78525"/>
        <dbReference type="ChEBI" id="CHEBI:136763"/>
        <dbReference type="EC" id="3.5.1.132"/>
    </reaction>
</comment>
<comment type="cofactor">
    <cofactor evidence="1">
        <name>Zn(2+)</name>
        <dbReference type="ChEBI" id="CHEBI:29105"/>
    </cofactor>
    <cofactor evidence="1">
        <name>Co(2+)</name>
        <dbReference type="ChEBI" id="CHEBI:48828"/>
    </cofactor>
    <text evidence="1">Binds 2 Zn(2+) or Co(2+) ions per subunit.</text>
</comment>
<comment type="pathway">
    <text evidence="1">Amino-acid biosynthesis; L-lysine biosynthesis via AAA pathway; L-lysine from L-alpha-aminoadipate (Thermus route): step 5/5.</text>
</comment>
<comment type="pathway">
    <text evidence="1">Amino-acid biosynthesis; L-arginine biosynthesis.</text>
</comment>
<comment type="subcellular location">
    <subcellularLocation>
        <location evidence="1">Cytoplasm</location>
    </subcellularLocation>
</comment>
<comment type="similarity">
    <text evidence="1">Belongs to the peptidase M20A family. LysK subfamily.</text>
</comment>
<dbReference type="EC" id="3.5.1.130" evidence="1"/>
<dbReference type="EC" id="3.5.1.132" evidence="1"/>
<dbReference type="EMBL" id="CP001401">
    <property type="protein sequence ID" value="ACP55923.1"/>
    <property type="molecule type" value="Genomic_DNA"/>
</dbReference>
<dbReference type="RefSeq" id="WP_012719005.1">
    <property type="nucleotide sequence ID" value="NC_012632.1"/>
</dbReference>
<dbReference type="SMR" id="C3MZU1"/>
<dbReference type="KEGG" id="sim:M1627_2056"/>
<dbReference type="HOGENOM" id="CLU_021802_2_0_2"/>
<dbReference type="UniPathway" id="UPA00033">
    <property type="reaction ID" value="UER00039"/>
</dbReference>
<dbReference type="UniPathway" id="UPA00068"/>
<dbReference type="Proteomes" id="UP000002307">
    <property type="component" value="Chromosome"/>
</dbReference>
<dbReference type="GO" id="GO:0005737">
    <property type="term" value="C:cytoplasm"/>
    <property type="evidence" value="ECO:0007669"/>
    <property type="project" value="UniProtKB-SubCell"/>
</dbReference>
<dbReference type="GO" id="GO:0050897">
    <property type="term" value="F:cobalt ion binding"/>
    <property type="evidence" value="ECO:0007669"/>
    <property type="project" value="UniProtKB-UniRule"/>
</dbReference>
<dbReference type="GO" id="GO:0016811">
    <property type="term" value="F:hydrolase activity, acting on carbon-nitrogen (but not peptide) bonds, in linear amides"/>
    <property type="evidence" value="ECO:0007669"/>
    <property type="project" value="UniProtKB-UniRule"/>
</dbReference>
<dbReference type="GO" id="GO:0008270">
    <property type="term" value="F:zinc ion binding"/>
    <property type="evidence" value="ECO:0007669"/>
    <property type="project" value="UniProtKB-UniRule"/>
</dbReference>
<dbReference type="GO" id="GO:0042450">
    <property type="term" value="P:arginine biosynthetic process via ornithine"/>
    <property type="evidence" value="ECO:0007669"/>
    <property type="project" value="UniProtKB-UniRule"/>
</dbReference>
<dbReference type="GO" id="GO:0006526">
    <property type="term" value="P:L-arginine biosynthetic process"/>
    <property type="evidence" value="ECO:0007669"/>
    <property type="project" value="UniProtKB-UniPathway"/>
</dbReference>
<dbReference type="GO" id="GO:0019878">
    <property type="term" value="P:lysine biosynthetic process via aminoadipic acid"/>
    <property type="evidence" value="ECO:0007669"/>
    <property type="project" value="UniProtKB-UniRule"/>
</dbReference>
<dbReference type="CDD" id="cd05653">
    <property type="entry name" value="M20_ArgE_LysK"/>
    <property type="match status" value="1"/>
</dbReference>
<dbReference type="Gene3D" id="3.30.70.360">
    <property type="match status" value="1"/>
</dbReference>
<dbReference type="Gene3D" id="3.40.630.10">
    <property type="entry name" value="Zn peptidases"/>
    <property type="match status" value="1"/>
</dbReference>
<dbReference type="HAMAP" id="MF_01120">
    <property type="entry name" value="LysK"/>
    <property type="match status" value="1"/>
</dbReference>
<dbReference type="InterPro" id="IPR001261">
    <property type="entry name" value="ArgE/DapE_CS"/>
</dbReference>
<dbReference type="InterPro" id="IPR036264">
    <property type="entry name" value="Bact_exopeptidase_dim_dom"/>
</dbReference>
<dbReference type="InterPro" id="IPR010175">
    <property type="entry name" value="LysK"/>
</dbReference>
<dbReference type="InterPro" id="IPR002933">
    <property type="entry name" value="Peptidase_M20"/>
</dbReference>
<dbReference type="InterPro" id="IPR011650">
    <property type="entry name" value="Peptidase_M20_dimer"/>
</dbReference>
<dbReference type="InterPro" id="IPR050072">
    <property type="entry name" value="Peptidase_M20A"/>
</dbReference>
<dbReference type="NCBIfam" id="TIGR01902">
    <property type="entry name" value="dapE-lys-deAc"/>
    <property type="match status" value="1"/>
</dbReference>
<dbReference type="NCBIfam" id="NF001747">
    <property type="entry name" value="PRK00466.1"/>
    <property type="match status" value="1"/>
</dbReference>
<dbReference type="PANTHER" id="PTHR43808:SF28">
    <property type="entry name" value="[LYSW]-LYSINE_[LYSW]-ORNITHINE HYDROLASE"/>
    <property type="match status" value="1"/>
</dbReference>
<dbReference type="PANTHER" id="PTHR43808">
    <property type="entry name" value="ACETYLORNITHINE DEACETYLASE"/>
    <property type="match status" value="1"/>
</dbReference>
<dbReference type="Pfam" id="PF07687">
    <property type="entry name" value="M20_dimer"/>
    <property type="match status" value="1"/>
</dbReference>
<dbReference type="Pfam" id="PF01546">
    <property type="entry name" value="Peptidase_M20"/>
    <property type="match status" value="1"/>
</dbReference>
<dbReference type="SUPFAM" id="SSF55031">
    <property type="entry name" value="Bacterial exopeptidase dimerisation domain"/>
    <property type="match status" value="1"/>
</dbReference>
<dbReference type="SUPFAM" id="SSF53187">
    <property type="entry name" value="Zn-dependent exopeptidases"/>
    <property type="match status" value="1"/>
</dbReference>
<dbReference type="PROSITE" id="PS00758">
    <property type="entry name" value="ARGE_DAPE_CPG2_1"/>
    <property type="match status" value="1"/>
</dbReference>
<proteinExistence type="inferred from homology"/>
<organism>
    <name type="scientific">Saccharolobus islandicus (strain M.16.27)</name>
    <name type="common">Sulfolobus islandicus</name>
    <dbReference type="NCBI Taxonomy" id="427318"/>
    <lineage>
        <taxon>Archaea</taxon>
        <taxon>Thermoproteota</taxon>
        <taxon>Thermoprotei</taxon>
        <taxon>Sulfolobales</taxon>
        <taxon>Sulfolobaceae</taxon>
        <taxon>Saccharolobus</taxon>
    </lineage>
</organism>
<feature type="chain" id="PRO_1000213613" description="[LysW]-lysine/[LysW]-ornithine hydrolase">
    <location>
        <begin position="1"/>
        <end position="346"/>
    </location>
</feature>
<feature type="active site" evidence="1">
    <location>
        <position position="70"/>
    </location>
</feature>
<feature type="active site" description="Proton acceptor" evidence="1">
    <location>
        <position position="122"/>
    </location>
</feature>
<feature type="binding site" evidence="1">
    <location>
        <position position="68"/>
    </location>
    <ligand>
        <name>Zn(2+)</name>
        <dbReference type="ChEBI" id="CHEBI:29105"/>
        <label>1</label>
    </ligand>
</feature>
<feature type="binding site" evidence="1">
    <location>
        <position position="92"/>
    </location>
    <ligand>
        <name>Zn(2+)</name>
        <dbReference type="ChEBI" id="CHEBI:29105"/>
        <label>1</label>
    </ligand>
</feature>
<feature type="binding site" evidence="1">
    <location>
        <position position="92"/>
    </location>
    <ligand>
        <name>Zn(2+)</name>
        <dbReference type="ChEBI" id="CHEBI:29105"/>
        <label>2</label>
    </ligand>
</feature>
<feature type="binding site" evidence="1">
    <location>
        <position position="123"/>
    </location>
    <ligand>
        <name>Zn(2+)</name>
        <dbReference type="ChEBI" id="CHEBI:29105"/>
        <label>2</label>
    </ligand>
</feature>
<feature type="binding site" evidence="1">
    <location>
        <position position="146"/>
    </location>
    <ligand>
        <name>Zn(2+)</name>
        <dbReference type="ChEBI" id="CHEBI:29105"/>
        <label>1</label>
    </ligand>
</feature>
<feature type="binding site" evidence="1">
    <location>
        <position position="317"/>
    </location>
    <ligand>
        <name>Zn(2+)</name>
        <dbReference type="ChEBI" id="CHEBI:29105"/>
        <label>2</label>
    </ligand>
</feature>
<sequence length="346" mass="38803">MQQEKELVKQKAKELLLDLLSIYTPSKNETNATKFFEKISNEFNLKLEILPDSNSFILGEGEILLASHVDTVPGYIEPKIENEVIYGRGAVDAKGPLISMIIAAWLLNEKGIKVMVSGLADEESTSIGAKELTLKNFNFKHIIVGEPSNGTDIVVEYRGSIQLDIMCESTPEHSSSAKSNLIVDISKKIIEVYKQPENYDKPSIVPTIIRAGESYNVTPAKLYLHFDVRYAINNKRDDLINEIKDKFQECGLKIVDETPPVKVSINNPVVKSLTRALLKQNIKPRLVRKAGTSDMNILQKITTSIATYGPGNSMLEHTNQEKITFDEIYIGVKTYMLAIEELWQKS</sequence>
<keyword id="KW-0028">Amino-acid biosynthesis</keyword>
<keyword id="KW-0055">Arginine biosynthesis</keyword>
<keyword id="KW-0170">Cobalt</keyword>
<keyword id="KW-0963">Cytoplasm</keyword>
<keyword id="KW-0378">Hydrolase</keyword>
<keyword id="KW-0457">Lysine biosynthesis</keyword>
<keyword id="KW-0479">Metal-binding</keyword>
<keyword id="KW-0862">Zinc</keyword>